<keyword id="KW-0997">Cell inner membrane</keyword>
<keyword id="KW-1003">Cell membrane</keyword>
<keyword id="KW-0472">Membrane</keyword>
<keyword id="KW-1185">Reference proteome</keyword>
<keyword id="KW-0812">Transmembrane</keyword>
<keyword id="KW-1133">Transmembrane helix</keyword>
<gene>
    <name evidence="1" type="primary">psiE</name>
    <name type="ordered locus">SSON_4208</name>
</gene>
<reference key="1">
    <citation type="journal article" date="2005" name="Nucleic Acids Res.">
        <title>Genome dynamics and diversity of Shigella species, the etiologic agents of bacillary dysentery.</title>
        <authorList>
            <person name="Yang F."/>
            <person name="Yang J."/>
            <person name="Zhang X."/>
            <person name="Chen L."/>
            <person name="Jiang Y."/>
            <person name="Yan Y."/>
            <person name="Tang X."/>
            <person name="Wang J."/>
            <person name="Xiong Z."/>
            <person name="Dong J."/>
            <person name="Xue Y."/>
            <person name="Zhu Y."/>
            <person name="Xu X."/>
            <person name="Sun L."/>
            <person name="Chen S."/>
            <person name="Nie H."/>
            <person name="Peng J."/>
            <person name="Xu J."/>
            <person name="Wang Y."/>
            <person name="Yuan Z."/>
            <person name="Wen Y."/>
            <person name="Yao Z."/>
            <person name="Shen Y."/>
            <person name="Qiang B."/>
            <person name="Hou Y."/>
            <person name="Yu J."/>
            <person name="Jin Q."/>
        </authorList>
    </citation>
    <scope>NUCLEOTIDE SEQUENCE [LARGE SCALE GENOMIC DNA]</scope>
    <source>
        <strain>Ss046</strain>
    </source>
</reference>
<proteinExistence type="inferred from homology"/>
<protein>
    <recommendedName>
        <fullName evidence="1">Protein PsiE</fullName>
    </recommendedName>
</protein>
<sequence length="136" mass="15597">MTSLSRPRVEFISTILQTVLNLGLLCLGLILVVFLGKETVHLADVLFAPEQTSKYELVEGLVVYFLYFEFIALIVKYFQSGFHFPLRYFVYIGITAIVRLIIVDHKSPLDVLIYSAAILLLVITLWLCNSKRLKRE</sequence>
<feature type="chain" id="PRO_1000064321" description="Protein PsiE">
    <location>
        <begin position="1"/>
        <end position="136"/>
    </location>
</feature>
<feature type="transmembrane region" description="Helical" evidence="1">
    <location>
        <begin position="15"/>
        <end position="35"/>
    </location>
</feature>
<feature type="transmembrane region" description="Helical" evidence="1">
    <location>
        <begin position="55"/>
        <end position="75"/>
    </location>
</feature>
<feature type="transmembrane region" description="Helical" evidence="1">
    <location>
        <begin position="82"/>
        <end position="102"/>
    </location>
</feature>
<feature type="transmembrane region" description="Helical" evidence="1">
    <location>
        <begin position="108"/>
        <end position="128"/>
    </location>
</feature>
<organism>
    <name type="scientific">Shigella sonnei (strain Ss046)</name>
    <dbReference type="NCBI Taxonomy" id="300269"/>
    <lineage>
        <taxon>Bacteria</taxon>
        <taxon>Pseudomonadati</taxon>
        <taxon>Pseudomonadota</taxon>
        <taxon>Gammaproteobacteria</taxon>
        <taxon>Enterobacterales</taxon>
        <taxon>Enterobacteriaceae</taxon>
        <taxon>Shigella</taxon>
    </lineage>
</organism>
<comment type="subcellular location">
    <subcellularLocation>
        <location evidence="1">Cell inner membrane</location>
        <topology evidence="1">Multi-pass membrane protein</topology>
    </subcellularLocation>
</comment>
<comment type="similarity">
    <text evidence="1">Belongs to the PsiE family.</text>
</comment>
<dbReference type="EMBL" id="CP000038">
    <property type="protein sequence ID" value="AAZ90707.1"/>
    <property type="molecule type" value="Genomic_DNA"/>
</dbReference>
<dbReference type="RefSeq" id="WP_000202902.1">
    <property type="nucleotide sequence ID" value="NC_007384.1"/>
</dbReference>
<dbReference type="SMR" id="Q3YUV5"/>
<dbReference type="GeneID" id="93777857"/>
<dbReference type="KEGG" id="ssn:SSON_4208"/>
<dbReference type="HOGENOM" id="CLU_127561_0_1_6"/>
<dbReference type="Proteomes" id="UP000002529">
    <property type="component" value="Chromosome"/>
</dbReference>
<dbReference type="GO" id="GO:0005886">
    <property type="term" value="C:plasma membrane"/>
    <property type="evidence" value="ECO:0007669"/>
    <property type="project" value="UniProtKB-SubCell"/>
</dbReference>
<dbReference type="GO" id="GO:0016036">
    <property type="term" value="P:cellular response to phosphate starvation"/>
    <property type="evidence" value="ECO:0007669"/>
    <property type="project" value="InterPro"/>
</dbReference>
<dbReference type="HAMAP" id="MF_01048">
    <property type="entry name" value="PsiE"/>
    <property type="match status" value="1"/>
</dbReference>
<dbReference type="InterPro" id="IPR009315">
    <property type="entry name" value="P_starv_induced_PsiE"/>
</dbReference>
<dbReference type="InterPro" id="IPR020948">
    <property type="entry name" value="P_starv_induced_PsiE-like"/>
</dbReference>
<dbReference type="NCBIfam" id="NF002764">
    <property type="entry name" value="PRK02833.1-2"/>
    <property type="match status" value="1"/>
</dbReference>
<dbReference type="NCBIfam" id="NF002765">
    <property type="entry name" value="PRK02833.1-3"/>
    <property type="match status" value="1"/>
</dbReference>
<dbReference type="NCBIfam" id="NF002767">
    <property type="entry name" value="PRK02833.1-5"/>
    <property type="match status" value="1"/>
</dbReference>
<dbReference type="PANTHER" id="PTHR37819">
    <property type="entry name" value="PROTEIN PSIE"/>
    <property type="match status" value="1"/>
</dbReference>
<dbReference type="PANTHER" id="PTHR37819:SF1">
    <property type="entry name" value="PROTEIN PSIE"/>
    <property type="match status" value="1"/>
</dbReference>
<dbReference type="Pfam" id="PF06146">
    <property type="entry name" value="PsiE"/>
    <property type="match status" value="1"/>
</dbReference>
<dbReference type="PIRSF" id="PIRSF029598">
    <property type="entry name" value="PsiE"/>
    <property type="match status" value="1"/>
</dbReference>
<name>PSIE_SHISS</name>
<accession>Q3YUV5</accession>
<evidence type="ECO:0000255" key="1">
    <source>
        <dbReference type="HAMAP-Rule" id="MF_01048"/>
    </source>
</evidence>